<organism>
    <name type="scientific">Gallus gallus</name>
    <name type="common">Chicken</name>
    <dbReference type="NCBI Taxonomy" id="9031"/>
    <lineage>
        <taxon>Eukaryota</taxon>
        <taxon>Metazoa</taxon>
        <taxon>Chordata</taxon>
        <taxon>Craniata</taxon>
        <taxon>Vertebrata</taxon>
        <taxon>Euteleostomi</taxon>
        <taxon>Archelosauria</taxon>
        <taxon>Archosauria</taxon>
        <taxon>Dinosauria</taxon>
        <taxon>Saurischia</taxon>
        <taxon>Theropoda</taxon>
        <taxon>Coelurosauria</taxon>
        <taxon>Aves</taxon>
        <taxon>Neognathae</taxon>
        <taxon>Galloanserae</taxon>
        <taxon>Galliformes</taxon>
        <taxon>Phasianidae</taxon>
        <taxon>Phasianinae</taxon>
        <taxon>Gallus</taxon>
    </lineage>
</organism>
<proteinExistence type="evidence at transcript level"/>
<accession>Q9W689</accession>
<sequence>MESIFHERQEGSLCAQHCLNNLLQGEYFSPVELSSIAQQLDEEERMRMAEGGVSSEEYRTFLQQPSVNMDDSGFFSIQVISNALKVWGLELILFNSPEYQRLGIDPINEKSFICNYKEHWFTVRKLGKQWFNLNSLLMGPELISDTYLALFLAQLQQEGYSIFVVKGDLPDCEADQLLQMIRVQQVQRPKLIGEETAQSRDQRLPRSDVDQAIEVSHPFDGTGMLDEDEENFQRALALSRQEIDMEDEEADLRRAIQLSMQGSRQSEFSNSLPQNASQPPHTSQTDSLSSEDLRRRRQAYFEKQQQQLQQQDLTLNLHDKPTINSSTLEADPGGDMSEEDMLQAAMNMSLESARNHLSTEEKK</sequence>
<feature type="chain" id="PRO_0000053834" description="Ataxin-3">
    <location>
        <begin position="1"/>
        <end position="363"/>
    </location>
</feature>
<feature type="domain" description="Josephin" evidence="4">
    <location>
        <begin position="1"/>
        <end position="180"/>
    </location>
</feature>
<feature type="domain" description="UIM 1" evidence="3">
    <location>
        <begin position="227"/>
        <end position="246"/>
    </location>
</feature>
<feature type="domain" description="UIM 2" evidence="3">
    <location>
        <begin position="247"/>
        <end position="266"/>
    </location>
</feature>
<feature type="domain" description="UIM 3" evidence="3">
    <location>
        <begin position="337"/>
        <end position="356"/>
    </location>
</feature>
<feature type="region of interest" description="Disordered" evidence="5">
    <location>
        <begin position="192"/>
        <end position="212"/>
    </location>
</feature>
<feature type="region of interest" description="Disordered" evidence="5">
    <location>
        <begin position="260"/>
        <end position="363"/>
    </location>
</feature>
<feature type="compositionally biased region" description="Basic and acidic residues" evidence="5">
    <location>
        <begin position="192"/>
        <end position="209"/>
    </location>
</feature>
<feature type="compositionally biased region" description="Polar residues" evidence="5">
    <location>
        <begin position="260"/>
        <end position="290"/>
    </location>
</feature>
<feature type="compositionally biased region" description="Basic and acidic residues" evidence="5">
    <location>
        <begin position="353"/>
        <end position="363"/>
    </location>
</feature>
<feature type="active site" description="Nucleophile" evidence="4">
    <location>
        <position position="14"/>
    </location>
</feature>
<feature type="active site" description="Proton acceptor" evidence="4">
    <location>
        <position position="119"/>
    </location>
</feature>
<feature type="active site" evidence="4">
    <location>
        <position position="134"/>
    </location>
</feature>
<protein>
    <recommendedName>
        <fullName>Ataxin-3</fullName>
        <ecNumber>3.4.19.12</ecNumber>
    </recommendedName>
    <alternativeName>
        <fullName>Machado-Joseph disease protein 1 homolog</fullName>
    </alternativeName>
</protein>
<reference key="1">
    <citation type="journal article" date="1999" name="Biochim. Biophys. Acta">
        <title>Conserved domains and lack of evidence for polyglutamine length polymorphism in the chicken homolog of the Machado-Joseph disease gene product ataxin-3.</title>
        <authorList>
            <person name="Linhartova I."/>
            <person name="Repitz M."/>
            <person name="Draber P."/>
            <person name="Nemec M."/>
            <person name="Wiche G."/>
            <person name="Propst F."/>
        </authorList>
    </citation>
    <scope>NUCLEOTIDE SEQUENCE [MRNA]</scope>
    <scope>TISSUE SPECIFICITY</scope>
    <source>
        <strain>SPAFAS</strain>
    </source>
</reference>
<reference key="2">
    <citation type="journal article" date="2003" name="Proteins">
        <title>Structural modeling of ataxin-3 reveals distant homology to adaptins.</title>
        <authorList>
            <person name="Albrecht M."/>
            <person name="Hoffmann D."/>
            <person name="Evert B.O."/>
            <person name="Schmitt I."/>
            <person name="Wuellner U."/>
            <person name="Lengauer T."/>
        </authorList>
    </citation>
    <scope>3D-STRUCTURE MODELING</scope>
</reference>
<comment type="function">
    <text evidence="1 2">Deubiquitinating enzyme involved in protein homeostasis maintenance, transcription, cytoskeleton regulation, myogenesis and degradation of misfolded chaperone substrates (By similarity). Binds long polyubiquitin chains and trims them, while it has weak or no activity against chains of 4 or less ubiquitins (By similarity). Involved in degradation of misfolded chaperone substrates via its interaction with STUB1/CHIP: recruited to monoubiquitinated STUB1/CHIP, and restricts the length of ubiquitin chain attached to STUB1/CHIP substrates and preventing further chain extension (By similarity). Interacts with key regulators of transcription and represses transcription: acts as a histone-binding protein that regulates transcription (By similarity). Acts as a negative regulator of mTORC1 signaling in response to amino acid deprivation by mediating deubiquitination of RHEB, thereby promoting RHEB inactivation by the TSC-TBC complex (By similarity). Regulates autophagy via the deubiquitination of 'Lys-402' of BECN1 leading to the stabilization of BECN1 (By similarity).</text>
</comment>
<comment type="catalytic activity">
    <reaction evidence="1">
        <text>Thiol-dependent hydrolysis of ester, thioester, amide, peptide and isopeptide bonds formed by the C-terminal Gly of ubiquitin (a 76-residue protein attached to proteins as an intracellular targeting signal).</text>
        <dbReference type="EC" id="3.4.19.12"/>
    </reaction>
</comment>
<comment type="subcellular location">
    <subcellularLocation>
        <location evidence="1">Nucleus matrix</location>
    </subcellularLocation>
    <subcellularLocation>
        <location evidence="1">Nucleus</location>
    </subcellularLocation>
    <subcellularLocation>
        <location evidence="1">Lysosome membrane</location>
        <topology evidence="1">Peripheral membrane protein</topology>
    </subcellularLocation>
    <text evidence="1">Predominantly nuclear, but not exclusively, inner nuclear matrix. Recruited to lysosomal membrane in response to amino acid deprivation by the RagA/RRAGA-RagB/RRAGB complex.</text>
</comment>
<comment type="tissue specificity">
    <text evidence="6">Widely expressed (PubMed:10023088).</text>
</comment>
<comment type="domain">
    <text evidence="2">The UIM domains bind ubiquitin and interact with various E3 ubiquitin-protein ligase, such as STUB1/CHIP (By similarity). They are essential to limit the length of ubiquitin chains (By similarity).</text>
</comment>
<gene>
    <name type="primary">ATXN3</name>
    <name type="synonym">MDJ1</name>
    <name type="synonym">MJD</name>
</gene>
<keyword id="KW-0378">Hydrolase</keyword>
<keyword id="KW-0458">Lysosome</keyword>
<keyword id="KW-0472">Membrane</keyword>
<keyword id="KW-0539">Nucleus</keyword>
<keyword id="KW-0645">Protease</keyword>
<keyword id="KW-1185">Reference proteome</keyword>
<keyword id="KW-0677">Repeat</keyword>
<keyword id="KW-0788">Thiol protease</keyword>
<keyword id="KW-0804">Transcription</keyword>
<keyword id="KW-0805">Transcription regulation</keyword>
<keyword id="KW-0833">Ubl conjugation pathway</keyword>
<dbReference type="EC" id="3.4.19.12"/>
<dbReference type="EMBL" id="AF085247">
    <property type="protein sequence ID" value="AAD21923.1"/>
    <property type="molecule type" value="mRNA"/>
</dbReference>
<dbReference type="RefSeq" id="NP_989688.1">
    <property type="nucleotide sequence ID" value="NM_204357.2"/>
</dbReference>
<dbReference type="SMR" id="Q9W689"/>
<dbReference type="FunCoup" id="Q9W689">
    <property type="interactions" value="969"/>
</dbReference>
<dbReference type="STRING" id="9031.ENSGALP00000068123"/>
<dbReference type="MEROPS" id="C86.001"/>
<dbReference type="PaxDb" id="9031-ENSGALP00000017488"/>
<dbReference type="Ensembl" id="ENSGALT00010036845.1">
    <property type="protein sequence ID" value="ENSGALP00010021465.1"/>
    <property type="gene ID" value="ENSGALG00010015300.1"/>
</dbReference>
<dbReference type="GeneID" id="378424"/>
<dbReference type="KEGG" id="gga:378424"/>
<dbReference type="CTD" id="4287"/>
<dbReference type="VEuPathDB" id="HostDB:geneid_378424"/>
<dbReference type="eggNOG" id="KOG2935">
    <property type="taxonomic scope" value="Eukaryota"/>
</dbReference>
<dbReference type="GeneTree" id="ENSGT00390000001830"/>
<dbReference type="HOGENOM" id="CLU_031228_1_0_1"/>
<dbReference type="InParanoid" id="Q9W689"/>
<dbReference type="OrthoDB" id="10063692at2759"/>
<dbReference type="PhylomeDB" id="Q9W689"/>
<dbReference type="TreeFam" id="TF314228"/>
<dbReference type="Reactome" id="R-GGA-5689877">
    <property type="pathway name" value="Josephin domain DUBs"/>
</dbReference>
<dbReference type="PRO" id="PR:Q9W689"/>
<dbReference type="Proteomes" id="UP000000539">
    <property type="component" value="Chromosome 5"/>
</dbReference>
<dbReference type="Bgee" id="ENSGALG00000010766">
    <property type="expression patterns" value="Expressed in testis and 13 other cell types or tissues"/>
</dbReference>
<dbReference type="GO" id="GO:0005765">
    <property type="term" value="C:lysosomal membrane"/>
    <property type="evidence" value="ECO:0000250"/>
    <property type="project" value="UniProtKB"/>
</dbReference>
<dbReference type="GO" id="GO:0016363">
    <property type="term" value="C:nuclear matrix"/>
    <property type="evidence" value="ECO:0007669"/>
    <property type="project" value="UniProtKB-SubCell"/>
</dbReference>
<dbReference type="GO" id="GO:0005634">
    <property type="term" value="C:nucleus"/>
    <property type="evidence" value="ECO:0000318"/>
    <property type="project" value="GO_Central"/>
</dbReference>
<dbReference type="GO" id="GO:0004843">
    <property type="term" value="F:cysteine-type deubiquitinase activity"/>
    <property type="evidence" value="ECO:0000250"/>
    <property type="project" value="UniProtKB"/>
</dbReference>
<dbReference type="GO" id="GO:0031625">
    <property type="term" value="F:ubiquitin protein ligase binding"/>
    <property type="evidence" value="ECO:0000250"/>
    <property type="project" value="UniProtKB"/>
</dbReference>
<dbReference type="GO" id="GO:0034198">
    <property type="term" value="P:cellular response to amino acid starvation"/>
    <property type="evidence" value="ECO:0000250"/>
    <property type="project" value="UniProtKB"/>
</dbReference>
<dbReference type="GO" id="GO:0071218">
    <property type="term" value="P:cellular response to misfolded protein"/>
    <property type="evidence" value="ECO:0000250"/>
    <property type="project" value="UniProtKB"/>
</dbReference>
<dbReference type="GO" id="GO:0035520">
    <property type="term" value="P:monoubiquitinated protein deubiquitination"/>
    <property type="evidence" value="ECO:0000250"/>
    <property type="project" value="UniProtKB"/>
</dbReference>
<dbReference type="GO" id="GO:1904262">
    <property type="term" value="P:negative regulation of TORC1 signaling"/>
    <property type="evidence" value="ECO:0000250"/>
    <property type="project" value="UniProtKB"/>
</dbReference>
<dbReference type="GO" id="GO:1904294">
    <property type="term" value="P:positive regulation of ERAD pathway"/>
    <property type="evidence" value="ECO:0000318"/>
    <property type="project" value="GO_Central"/>
</dbReference>
<dbReference type="GO" id="GO:0043161">
    <property type="term" value="P:proteasome-mediated ubiquitin-dependent protein catabolic process"/>
    <property type="evidence" value="ECO:0000250"/>
    <property type="project" value="UniProtKB"/>
</dbReference>
<dbReference type="GO" id="GO:0006515">
    <property type="term" value="P:protein quality control for misfolded or incompletely synthesized proteins"/>
    <property type="evidence" value="ECO:0000250"/>
    <property type="project" value="UniProtKB"/>
</dbReference>
<dbReference type="FunFam" id="3.90.70.40:FF:000005">
    <property type="entry name" value="Ataxin 3"/>
    <property type="match status" value="1"/>
</dbReference>
<dbReference type="FunFam" id="1.10.287.10:FF:000005">
    <property type="entry name" value="ataxin-3 isoform X1"/>
    <property type="match status" value="1"/>
</dbReference>
<dbReference type="Gene3D" id="3.90.70.40">
    <property type="match status" value="1"/>
</dbReference>
<dbReference type="Gene3D" id="1.10.287.10">
    <property type="entry name" value="S15/NS1, RNA-binding"/>
    <property type="match status" value="1"/>
</dbReference>
<dbReference type="InterPro" id="IPR033865">
    <property type="entry name" value="Ataxin-3"/>
</dbReference>
<dbReference type="InterPro" id="IPR006155">
    <property type="entry name" value="Josephin"/>
</dbReference>
<dbReference type="InterPro" id="IPR003903">
    <property type="entry name" value="UIM_dom"/>
</dbReference>
<dbReference type="PANTHER" id="PTHR14159">
    <property type="entry name" value="ATAXIN-3-RELATED"/>
    <property type="match status" value="1"/>
</dbReference>
<dbReference type="PANTHER" id="PTHR14159:SF0">
    <property type="entry name" value="ATAXIN-3-RELATED"/>
    <property type="match status" value="1"/>
</dbReference>
<dbReference type="Pfam" id="PF02099">
    <property type="entry name" value="Josephin"/>
    <property type="match status" value="1"/>
</dbReference>
<dbReference type="Pfam" id="PF16619">
    <property type="entry name" value="SUIM_assoc"/>
    <property type="match status" value="1"/>
</dbReference>
<dbReference type="Pfam" id="PF02809">
    <property type="entry name" value="UIM"/>
    <property type="match status" value="3"/>
</dbReference>
<dbReference type="PRINTS" id="PR01233">
    <property type="entry name" value="JOSEPHIN"/>
</dbReference>
<dbReference type="SMART" id="SM01246">
    <property type="entry name" value="Josephin"/>
    <property type="match status" value="1"/>
</dbReference>
<dbReference type="SMART" id="SM00726">
    <property type="entry name" value="UIM"/>
    <property type="match status" value="3"/>
</dbReference>
<dbReference type="PROSITE" id="PS50957">
    <property type="entry name" value="JOSEPHIN"/>
    <property type="match status" value="1"/>
</dbReference>
<dbReference type="PROSITE" id="PS50330">
    <property type="entry name" value="UIM"/>
    <property type="match status" value="3"/>
</dbReference>
<name>ATX3_CHICK</name>
<evidence type="ECO:0000250" key="1">
    <source>
        <dbReference type="UniProtKB" id="P54252"/>
    </source>
</evidence>
<evidence type="ECO:0000250" key="2">
    <source>
        <dbReference type="UniProtKB" id="Q9CVD2"/>
    </source>
</evidence>
<evidence type="ECO:0000255" key="3">
    <source>
        <dbReference type="PROSITE-ProRule" id="PRU00213"/>
    </source>
</evidence>
<evidence type="ECO:0000255" key="4">
    <source>
        <dbReference type="PROSITE-ProRule" id="PRU00331"/>
    </source>
</evidence>
<evidence type="ECO:0000256" key="5">
    <source>
        <dbReference type="SAM" id="MobiDB-lite"/>
    </source>
</evidence>
<evidence type="ECO:0000269" key="6">
    <source>
    </source>
</evidence>